<name>IBP2_BOVIN</name>
<feature type="signal peptide" evidence="7">
    <location>
        <begin position="1"/>
        <end position="33"/>
    </location>
</feature>
<feature type="chain" id="PRO_0000014369" description="Insulin-like growth factor-binding protein 2">
    <location>
        <begin position="34"/>
        <end position="317"/>
    </location>
</feature>
<feature type="domain" description="IGFBP N-terminal" evidence="5">
    <location>
        <begin position="35"/>
        <end position="126"/>
    </location>
</feature>
<feature type="domain" description="Thyroglobulin type-1" evidence="4">
    <location>
        <begin position="216"/>
        <end position="298"/>
    </location>
</feature>
<feature type="region of interest" description="Disordered" evidence="6">
    <location>
        <begin position="126"/>
        <end position="146"/>
    </location>
</feature>
<feature type="region of interest" description="Disordered" evidence="6">
    <location>
        <begin position="190"/>
        <end position="218"/>
    </location>
</feature>
<feature type="short sequence motif" description="Cell attachment site" evidence="3">
    <location>
        <begin position="293"/>
        <end position="295"/>
    </location>
</feature>
<feature type="disulfide bond" evidence="5">
    <location>
        <begin position="39"/>
        <end position="76"/>
    </location>
</feature>
<feature type="disulfide bond" evidence="5">
    <location>
        <begin position="42"/>
        <end position="78"/>
    </location>
</feature>
<feature type="disulfide bond" evidence="5">
    <location>
        <begin position="50"/>
        <end position="79"/>
    </location>
</feature>
<feature type="disulfide bond" evidence="5">
    <location>
        <begin position="68"/>
        <end position="82"/>
    </location>
</feature>
<feature type="disulfide bond" evidence="5">
    <location>
        <begin position="90"/>
        <end position="103"/>
    </location>
</feature>
<feature type="disulfide bond" evidence="5">
    <location>
        <begin position="97"/>
        <end position="123"/>
    </location>
</feature>
<feature type="disulfide bond" evidence="4">
    <location>
        <begin position="219"/>
        <end position="253"/>
    </location>
</feature>
<feature type="disulfide bond" evidence="4">
    <location>
        <begin position="264"/>
        <end position="275"/>
    </location>
</feature>
<feature type="disulfide bond" evidence="4">
    <location>
        <begin position="277"/>
        <end position="298"/>
    </location>
</feature>
<feature type="sequence conflict" description="In Ref. 2." evidence="8" ref="2">
    <original>RA</original>
    <variation>AS</variation>
    <location>
        <begin position="32"/>
        <end position="33"/>
    </location>
</feature>
<feature type="sequence conflict" description="In Ref. 3; AA sequence." evidence="8" ref="3">
    <original>S</original>
    <variation>C</variation>
    <location>
        <position position="46"/>
    </location>
</feature>
<feature type="sequence conflict" description="In Ref. 2." evidence="8" ref="2">
    <original>PA</original>
    <variation>AP</variation>
    <location>
        <begin position="60"/>
        <end position="61"/>
    </location>
</feature>
<feature type="sequence conflict" description="In Ref. 3; AA sequence." evidence="8" ref="3">
    <original>C</original>
    <variation>F</variation>
    <location>
        <position position="82"/>
    </location>
</feature>
<feature type="sequence conflict" description="In Ref. 2." evidence="8" ref="2">
    <original>R</original>
    <variation>H</variation>
    <location>
        <position position="114"/>
    </location>
</feature>
<feature type="sequence conflict" description="In Ref. 2." evidence="8" ref="2">
    <original>D</original>
    <variation>S</variation>
    <location>
        <position position="128"/>
    </location>
</feature>
<feature type="sequence conflict" description="In Ref. 2." evidence="8" ref="2">
    <original>S</original>
    <variation>T</variation>
    <location>
        <position position="134"/>
    </location>
</feature>
<feature type="sequence conflict" description="In Ref. 2." evidence="8" ref="2">
    <original>T</original>
    <variation>N</variation>
    <location>
        <position position="313"/>
    </location>
</feature>
<keyword id="KW-0903">Direct protein sequencing</keyword>
<keyword id="KW-1015">Disulfide bond</keyword>
<keyword id="KW-0325">Glycoprotein</keyword>
<keyword id="KW-0340">Growth factor binding</keyword>
<keyword id="KW-0341">Growth regulation</keyword>
<keyword id="KW-1185">Reference proteome</keyword>
<keyword id="KW-0964">Secreted</keyword>
<keyword id="KW-0732">Signal</keyword>
<proteinExistence type="evidence at protein level"/>
<comment type="function">
    <text evidence="2">Multifunctional protein that plays a critical role in regulating the availability of IGFs such as IGF1 and IGF2 to their receptors and thereby regulates IGF-mediated cellular processes including proliferation, differentiation, and apoptosis in a cell-type specific manner. Functions coordinately with receptor protein tyrosine phosphatase beta/PTPRB and the IGF1 receptor to regulate IGF1-mediated signaling by stimulating the phosphorylation of PTEN leading to its inactivation and AKT1 activation. Plays a positive role in cell migration via interaction with integrin alpha5/ITGA5 through an RGD motif. Additionally, interaction with ITGA5/ITGB1 enhances the adhesion of endothelial progenitor cells to endothelial cells. Upon mitochondrial damage, facilitates apoptosis with ITGA5 of podocytes, and then activates the phosphorylation of focal adhesion kinase (FAK)-mediated mitochondrial injury.</text>
</comment>
<comment type="subunit">
    <text evidence="2">Interacts with IGF1. Interacts with IGF2. Interacts (via RGD motif) with integrin alpha5/ITGA5; this interaction induces cell migration, adhesion or apoptosis according to the context. Interacts with PTPRB; this interaction leads to PTPRB dimerization and inactivation.</text>
</comment>
<comment type="subcellular location">
    <subcellularLocation>
        <location evidence="2">Secreted</location>
    </subcellularLocation>
</comment>
<comment type="domain">
    <text evidence="1">The C-terminus is required for IGF-binding and growth inhibition.</text>
</comment>
<comment type="PTM">
    <text evidence="2">Cleaved by MMP9 leading to release of free IGF2 from IGFBP2-IGF2 complex, which contributes to enhance the motility and the growth of astrocytes.</text>
</comment>
<comment type="PTM">
    <text evidence="2">O-glycosylated.</text>
</comment>
<accession>P13384</accession>
<accession>O97599</accession>
<reference key="1">
    <citation type="journal article" date="1992" name="J. Cell. Biochem.">
        <title>Cloning and sequence determination of bovine insulin-like growth factor binding protein-2 (IGFBP-2): comparison of its structural and functional properties with IGFBP-1.</title>
        <authorList>
            <person name="Bourner M.J."/>
            <person name="Busby W.H. Jr."/>
            <person name="Siegel N.R."/>
            <person name="Krivi G.G."/>
            <person name="McCusker R.H."/>
            <person name="Clemmons D.R."/>
        </authorList>
    </citation>
    <scope>NUCLEOTIDE SEQUENCE [MRNA]</scope>
    <scope>CHARACTERIZATION</scope>
</reference>
<reference key="2">
    <citation type="journal article" date="1990" name="J. Mol. Endocrinol.">
        <title>Characterization and cloning of a bovine insulin-like growth factor-binding protein.</title>
        <authorList>
            <person name="Upton F.Z."/>
            <person name="Szabo L."/>
            <person name="Wallace J.C."/>
            <person name="Ballard F.J."/>
        </authorList>
    </citation>
    <scope>NUCLEOTIDE SEQUENCE [MRNA] OF 8-317</scope>
</reference>
<reference key="3">
    <citation type="journal article" date="1988" name="Biochem. Biophys. Res. Commun.">
        <title>The bovine insulin-like growth factor (IGF) binding protein purified from conditioned medium requires the N-terminal tripeptide in IGF-1 for binding.</title>
        <authorList>
            <person name="Szabo L."/>
            <person name="Mottershead D.G."/>
            <person name="Ballard F.J."/>
            <person name="Wallace J.C."/>
        </authorList>
    </citation>
    <scope>PROTEIN SEQUENCE OF 34-86</scope>
</reference>
<organism>
    <name type="scientific">Bos taurus</name>
    <name type="common">Bovine</name>
    <dbReference type="NCBI Taxonomy" id="9913"/>
    <lineage>
        <taxon>Eukaryota</taxon>
        <taxon>Metazoa</taxon>
        <taxon>Chordata</taxon>
        <taxon>Craniata</taxon>
        <taxon>Vertebrata</taxon>
        <taxon>Euteleostomi</taxon>
        <taxon>Mammalia</taxon>
        <taxon>Eutheria</taxon>
        <taxon>Laurasiatheria</taxon>
        <taxon>Artiodactyla</taxon>
        <taxon>Ruminantia</taxon>
        <taxon>Pecora</taxon>
        <taxon>Bovidae</taxon>
        <taxon>Bovinae</taxon>
        <taxon>Bos</taxon>
    </lineage>
</organism>
<evidence type="ECO:0000250" key="1"/>
<evidence type="ECO:0000250" key="2">
    <source>
        <dbReference type="UniProtKB" id="P18065"/>
    </source>
</evidence>
<evidence type="ECO:0000255" key="3"/>
<evidence type="ECO:0000255" key="4">
    <source>
        <dbReference type="PROSITE-ProRule" id="PRU00500"/>
    </source>
</evidence>
<evidence type="ECO:0000255" key="5">
    <source>
        <dbReference type="PROSITE-ProRule" id="PRU00653"/>
    </source>
</evidence>
<evidence type="ECO:0000256" key="6">
    <source>
        <dbReference type="SAM" id="MobiDB-lite"/>
    </source>
</evidence>
<evidence type="ECO:0000269" key="7">
    <source>
    </source>
</evidence>
<evidence type="ECO:0000305" key="8"/>
<protein>
    <recommendedName>
        <fullName>Insulin-like growth factor-binding protein 2</fullName>
        <shortName>IBP-2</shortName>
        <shortName>IGF-binding protein 2</shortName>
        <shortName>IGFBP-2</shortName>
    </recommendedName>
</protein>
<gene>
    <name type="primary">IGFBP2</name>
</gene>
<sequence>MQPRLGGPALLLLPPLLLLLLLGAGGGDCGARAEVLFRCPPCTPESLAACKPPPGAAAGPAGDARVPCELVREPGCGCCSVCARLEGERCGVYTPRCGQGLRCYPNPGSELPLRALVHGEGTCEKHGDAEYSASPEQVADNGEEHSEGGLVENHVDGNVNLMGGGGGAGRKPLKSGMKELAVFREKVTEQHRQMGKGGKHHLGLEEPKKLRPPPARTPCQQELDQVLERISTMRLPDERGPLEHLYSLHIPNCDKHGLYNLKQCKMSLNGQRGECWCVNPNTGKLIQGAPTIRGDPECHLFYNEQQGARGVHTQRMQ</sequence>
<dbReference type="EMBL" id="AF074854">
    <property type="protein sequence ID" value="AAD04862.1"/>
    <property type="molecule type" value="mRNA"/>
</dbReference>
<dbReference type="PIR" id="A60967">
    <property type="entry name" value="A60967"/>
</dbReference>
<dbReference type="RefSeq" id="NP_776980.1">
    <property type="nucleotide sequence ID" value="NM_174555.1"/>
</dbReference>
<dbReference type="BMRB" id="P13384"/>
<dbReference type="SMR" id="P13384"/>
<dbReference type="FunCoup" id="P13384">
    <property type="interactions" value="163"/>
</dbReference>
<dbReference type="STRING" id="9913.ENSBTAP00000007349"/>
<dbReference type="MEROPS" id="I31.953"/>
<dbReference type="GeneID" id="282260"/>
<dbReference type="KEGG" id="bta:282260"/>
<dbReference type="CTD" id="3485"/>
<dbReference type="VEuPathDB" id="HostDB:ENSBTAG00000005596"/>
<dbReference type="InParanoid" id="P13384"/>
<dbReference type="OMA" id="NLMPITM"/>
<dbReference type="OrthoDB" id="9984807at2759"/>
<dbReference type="Reactome" id="R-BTA-381426">
    <property type="pathway name" value="Regulation of Insulin-like Growth Factor (IGF) transport and uptake by Insulin-like Growth Factor Binding Proteins (IGFBPs)"/>
</dbReference>
<dbReference type="Proteomes" id="UP000009136">
    <property type="component" value="Chromosome 2"/>
</dbReference>
<dbReference type="Bgee" id="ENSBTAG00000005596">
    <property type="expression patterns" value="Expressed in anterior segment of eyeball and 103 other cell types or tissues"/>
</dbReference>
<dbReference type="GO" id="GO:0005576">
    <property type="term" value="C:extracellular region"/>
    <property type="evidence" value="ECO:0000250"/>
    <property type="project" value="UniProtKB"/>
</dbReference>
<dbReference type="GO" id="GO:0005615">
    <property type="term" value="C:extracellular space"/>
    <property type="evidence" value="ECO:0000314"/>
    <property type="project" value="AgBase"/>
</dbReference>
<dbReference type="GO" id="GO:0031994">
    <property type="term" value="F:insulin-like growth factor I binding"/>
    <property type="evidence" value="ECO:0000250"/>
    <property type="project" value="UniProtKB"/>
</dbReference>
<dbReference type="GO" id="GO:0031995">
    <property type="term" value="F:insulin-like growth factor II binding"/>
    <property type="evidence" value="ECO:0000250"/>
    <property type="project" value="UniProtKB"/>
</dbReference>
<dbReference type="GO" id="GO:0042104">
    <property type="term" value="P:positive regulation of activated T cell proliferation"/>
    <property type="evidence" value="ECO:0000250"/>
    <property type="project" value="UniProtKB"/>
</dbReference>
<dbReference type="GO" id="GO:0043567">
    <property type="term" value="P:regulation of insulin-like growth factor receptor signaling pathway"/>
    <property type="evidence" value="ECO:0000250"/>
    <property type="project" value="UniProtKB"/>
</dbReference>
<dbReference type="GO" id="GO:0032868">
    <property type="term" value="P:response to insulin"/>
    <property type="evidence" value="ECO:0000314"/>
    <property type="project" value="AgBase"/>
</dbReference>
<dbReference type="CDD" id="cd00191">
    <property type="entry name" value="TY"/>
    <property type="match status" value="1"/>
</dbReference>
<dbReference type="FunFam" id="4.10.40.20:FF:000007">
    <property type="entry name" value="Insulin-like growth factor-binding protein 2"/>
    <property type="match status" value="1"/>
</dbReference>
<dbReference type="FunFam" id="4.10.800.10:FF:000002">
    <property type="entry name" value="Insulin-like growth factor-binding protein 2"/>
    <property type="match status" value="1"/>
</dbReference>
<dbReference type="Gene3D" id="4.10.40.20">
    <property type="match status" value="1"/>
</dbReference>
<dbReference type="Gene3D" id="4.10.800.10">
    <property type="entry name" value="Thyroglobulin type-1"/>
    <property type="match status" value="1"/>
</dbReference>
<dbReference type="InterPro" id="IPR009030">
    <property type="entry name" value="Growth_fac_rcpt_cys_sf"/>
</dbReference>
<dbReference type="InterPro" id="IPR012210">
    <property type="entry name" value="IGFBP-2"/>
</dbReference>
<dbReference type="InterPro" id="IPR000867">
    <property type="entry name" value="IGFBP-like"/>
</dbReference>
<dbReference type="InterPro" id="IPR022321">
    <property type="entry name" value="IGFBP_1-6_chordata"/>
</dbReference>
<dbReference type="InterPro" id="IPR017891">
    <property type="entry name" value="Insulin_GF-bd_Cys-rich_CS"/>
</dbReference>
<dbReference type="InterPro" id="IPR000716">
    <property type="entry name" value="Thyroglobulin_1"/>
</dbReference>
<dbReference type="InterPro" id="IPR036857">
    <property type="entry name" value="Thyroglobulin_1_sf"/>
</dbReference>
<dbReference type="PANTHER" id="PTHR11551">
    <property type="entry name" value="INSULIN-LIKE GROWTH FACTOR BINDING PROTEIN"/>
    <property type="match status" value="1"/>
</dbReference>
<dbReference type="PANTHER" id="PTHR11551:SF5">
    <property type="entry name" value="INSULIN-LIKE GROWTH FACTOR-BINDING PROTEIN 2"/>
    <property type="match status" value="1"/>
</dbReference>
<dbReference type="Pfam" id="PF00219">
    <property type="entry name" value="IGFBP"/>
    <property type="match status" value="1"/>
</dbReference>
<dbReference type="Pfam" id="PF00086">
    <property type="entry name" value="Thyroglobulin_1"/>
    <property type="match status" value="1"/>
</dbReference>
<dbReference type="PRINTS" id="PR01976">
    <property type="entry name" value="IGFBPFAMILY"/>
</dbReference>
<dbReference type="PRINTS" id="PR01978">
    <property type="entry name" value="IGFBPFAMILY2"/>
</dbReference>
<dbReference type="SMART" id="SM00121">
    <property type="entry name" value="IB"/>
    <property type="match status" value="1"/>
</dbReference>
<dbReference type="SMART" id="SM00211">
    <property type="entry name" value="TY"/>
    <property type="match status" value="1"/>
</dbReference>
<dbReference type="SUPFAM" id="SSF57184">
    <property type="entry name" value="Growth factor receptor domain"/>
    <property type="match status" value="1"/>
</dbReference>
<dbReference type="SUPFAM" id="SSF57610">
    <property type="entry name" value="Thyroglobulin type-1 domain"/>
    <property type="match status" value="1"/>
</dbReference>
<dbReference type="PROSITE" id="PS00222">
    <property type="entry name" value="IGFBP_N_1"/>
    <property type="match status" value="1"/>
</dbReference>
<dbReference type="PROSITE" id="PS51323">
    <property type="entry name" value="IGFBP_N_2"/>
    <property type="match status" value="1"/>
</dbReference>
<dbReference type="PROSITE" id="PS00484">
    <property type="entry name" value="THYROGLOBULIN_1_1"/>
    <property type="match status" value="1"/>
</dbReference>
<dbReference type="PROSITE" id="PS51162">
    <property type="entry name" value="THYROGLOBULIN_1_2"/>
    <property type="match status" value="1"/>
</dbReference>